<proteinExistence type="evidence at protein level"/>
<feature type="chain" id="PRO_0000447598" description="(S)-N-methylcanadine 1-hydroxylase CYP82Y1">
    <location>
        <begin position="1"/>
        <end position="556"/>
    </location>
</feature>
<feature type="transmembrane region" description="Helical" evidence="2">
    <location>
        <begin position="18"/>
        <end position="38"/>
    </location>
</feature>
<feature type="binding site" description="axial binding residue" evidence="1">
    <location>
        <position position="500"/>
    </location>
    <ligand>
        <name>heme</name>
        <dbReference type="ChEBI" id="CHEBI:30413"/>
    </ligand>
    <ligandPart>
        <name>Fe</name>
        <dbReference type="ChEBI" id="CHEBI:18248"/>
    </ligandPart>
</feature>
<accession>I3PLR1</accession>
<dbReference type="EC" id="1.14.14.166" evidence="4 5"/>
<dbReference type="EMBL" id="JQ659005">
    <property type="protein sequence ID" value="AFB74617.1"/>
    <property type="molecule type" value="Genomic_DNA"/>
</dbReference>
<dbReference type="SMR" id="I3PLR1"/>
<dbReference type="EnsemblPlants" id="RZC84733">
    <property type="protein sequence ID" value="RZC84733"/>
    <property type="gene ID" value="C5167_047515"/>
</dbReference>
<dbReference type="Gramene" id="RZC84733">
    <property type="protein sequence ID" value="RZC84733"/>
    <property type="gene ID" value="C5167_047515"/>
</dbReference>
<dbReference type="KEGG" id="ag:AFB74617"/>
<dbReference type="OMA" id="MAYLMIK"/>
<dbReference type="OrthoDB" id="1470350at2759"/>
<dbReference type="BioCyc" id="MetaCyc:MONOMER-20623"/>
<dbReference type="BRENDA" id="1.14.14.166">
    <property type="organism ID" value="4515"/>
</dbReference>
<dbReference type="SABIO-RK" id="I3PLR1"/>
<dbReference type="GO" id="GO:0016020">
    <property type="term" value="C:membrane"/>
    <property type="evidence" value="ECO:0007669"/>
    <property type="project" value="UniProtKB-SubCell"/>
</dbReference>
<dbReference type="GO" id="GO:0020037">
    <property type="term" value="F:heme binding"/>
    <property type="evidence" value="ECO:0007669"/>
    <property type="project" value="InterPro"/>
</dbReference>
<dbReference type="GO" id="GO:0005506">
    <property type="term" value="F:iron ion binding"/>
    <property type="evidence" value="ECO:0007669"/>
    <property type="project" value="InterPro"/>
</dbReference>
<dbReference type="GO" id="GO:0004497">
    <property type="term" value="F:monooxygenase activity"/>
    <property type="evidence" value="ECO:0007669"/>
    <property type="project" value="UniProtKB-KW"/>
</dbReference>
<dbReference type="GO" id="GO:0016705">
    <property type="term" value="F:oxidoreductase activity, acting on paired donors, with incorporation or reduction of molecular oxygen"/>
    <property type="evidence" value="ECO:0007669"/>
    <property type="project" value="InterPro"/>
</dbReference>
<dbReference type="GO" id="GO:0033075">
    <property type="term" value="P:isoquinoline alkaloid biosynthetic process"/>
    <property type="evidence" value="ECO:0007669"/>
    <property type="project" value="UniProtKB-ARBA"/>
</dbReference>
<dbReference type="CDD" id="cd20654">
    <property type="entry name" value="CYP82"/>
    <property type="match status" value="1"/>
</dbReference>
<dbReference type="FunFam" id="1.10.630.10:FF:000026">
    <property type="entry name" value="Cytochrome P450 82C4"/>
    <property type="match status" value="1"/>
</dbReference>
<dbReference type="Gene3D" id="1.10.630.10">
    <property type="entry name" value="Cytochrome P450"/>
    <property type="match status" value="1"/>
</dbReference>
<dbReference type="InterPro" id="IPR001128">
    <property type="entry name" value="Cyt_P450"/>
</dbReference>
<dbReference type="InterPro" id="IPR017972">
    <property type="entry name" value="Cyt_P450_CS"/>
</dbReference>
<dbReference type="InterPro" id="IPR002401">
    <property type="entry name" value="Cyt_P450_E_grp-I"/>
</dbReference>
<dbReference type="InterPro" id="IPR036396">
    <property type="entry name" value="Cyt_P450_sf"/>
</dbReference>
<dbReference type="InterPro" id="IPR050651">
    <property type="entry name" value="Plant_Cytochrome_P450_Monoox"/>
</dbReference>
<dbReference type="PANTHER" id="PTHR47947:SF26">
    <property type="entry name" value="CYTOCHROME P450"/>
    <property type="match status" value="1"/>
</dbReference>
<dbReference type="PANTHER" id="PTHR47947">
    <property type="entry name" value="CYTOCHROME P450 82C3-RELATED"/>
    <property type="match status" value="1"/>
</dbReference>
<dbReference type="Pfam" id="PF00067">
    <property type="entry name" value="p450"/>
    <property type="match status" value="1"/>
</dbReference>
<dbReference type="PRINTS" id="PR00463">
    <property type="entry name" value="EP450I"/>
</dbReference>
<dbReference type="PRINTS" id="PR00385">
    <property type="entry name" value="P450"/>
</dbReference>
<dbReference type="SUPFAM" id="SSF48264">
    <property type="entry name" value="Cytochrome P450"/>
    <property type="match status" value="1"/>
</dbReference>
<dbReference type="PROSITE" id="PS00086">
    <property type="entry name" value="CYTOCHROME_P450"/>
    <property type="match status" value="1"/>
</dbReference>
<protein>
    <recommendedName>
        <fullName evidence="8">(S)-N-methylcanadine 1-hydroxylase CYP82Y1</fullName>
        <ecNumber evidence="4 5">1.14.14.166</ecNumber>
    </recommendedName>
    <alternativeName>
        <fullName evidence="7">Cytochrome P450 82Y1</fullName>
    </alternativeName>
</protein>
<sequence>MAYLMIKKSIYLFFDQPTAVGTLILAFLLTLSPVIIYYEQKKRGLRRNRTAITTTPLPEASGAWPVIGHLLLFMNENDLNHVTLGHMADKYGPIFSLRFGRHRTLVVSSWEMVKECFTGTNDKLFSNRPSSLAVKLMFYDTESYGFAPYGKYWRELRKISTHKLLSNQQLEKFKHLRISEVDNSFKKLHELCSNNKQGGDTTYVASLVRMDDWFAYLTFNVIGRIVSGFQSNAVAGATNSQEKYKLAIDEVSNLMATFAVSDVVPRLGWIDRLTGLTGKMKNCGKKLDAVVGDAVEDHRQKKLKISRNNTGALTEHEEEDFIDVCLSIMEQSQIPGNHPEISVKSIALDMLSGGSDTTKLIMTWTLSLLLNHPDILDKAKEEVDTYFGKKKISDNTPVVDAADVPNLVYIQAIIKESMRLYPASTLMERMTSDDCDVGGFHVPAGTRLWVNVWKMQRDPRVWKDPLVFLPERFLSNDKGMVDVKGQNYELIPFGTGRRICPGASFALEVLHLVLTRLILEFEMKAPEGKIDMRARPGFFHNKVVPLDVQLTPRTLD</sequence>
<reference key="1">
    <citation type="journal article" date="2012" name="Science">
        <title>A Papaver somniferum 10-gene cluster for synthesis of the anticancer alkaloid noscapine.</title>
        <authorList>
            <person name="Winzer T."/>
            <person name="Gazda V."/>
            <person name="He Z."/>
            <person name="Kaminski F."/>
            <person name="Kern M."/>
            <person name="Larson T.R."/>
            <person name="Li Y."/>
            <person name="Meade F."/>
            <person name="Teodor R."/>
            <person name="Vaistij F.E."/>
            <person name="Walker C."/>
            <person name="Bowser T.A."/>
            <person name="Graham I.A."/>
        </authorList>
    </citation>
    <scope>NUCLEOTIDE SEQUENCE [GENOMIC DNA]</scope>
    <scope>TISSUE SPECIFICITY</scope>
</reference>
<reference key="2">
    <citation type="journal article" date="2014" name="J. Biol. Chem.">
        <title>CYP82Y1 is N-methylcanadine 1-hydroxylase, a key noscapine biosynthetic enzyme in opium poppy.</title>
        <authorList>
            <person name="Dang T.T."/>
            <person name="Facchini P.J."/>
        </authorList>
    </citation>
    <scope>FUNCTION</scope>
    <scope>CATALYTIC ACTIVITY</scope>
    <scope>BIOPHYSICOCHEMICAL PROPERTIES</scope>
</reference>
<reference key="3">
    <citation type="journal article" date="2016" name="Nat. Commun.">
        <title>Engineering biosynthesis of the anticancer alkaloid noscapine in yeast.</title>
        <authorList>
            <person name="Li Y."/>
            <person name="Smolke C.D."/>
        </authorList>
    </citation>
    <scope>FUNCTION</scope>
    <scope>CATALYTIC ACTIVITY</scope>
</reference>
<reference key="4">
    <citation type="journal article" date="2018" name="Proc. Natl. Acad. Sci. U.S.A.">
        <title>Complete biosynthesis of noscapine and halogenated alkaloids in yeast.</title>
        <authorList>
            <person name="Li Y."/>
            <person name="Li S."/>
            <person name="Thodey K."/>
            <person name="Trenchard I."/>
            <person name="Cravens A."/>
            <person name="Smolke C.D."/>
        </authorList>
    </citation>
    <scope>FUNCTION</scope>
</reference>
<comment type="function">
    <text evidence="4 5 6">Cytochrome P450 involved in the biosynthesis of the benzylisoquinoline alkaloid noscapine (PubMed:24324259, PubMed:27378283, PubMed:29610307). Converts (S)-N-methylcanadine to (S)-1-hydroxy-N-methylcanadine (PubMed:24324259, PubMed:27378283).</text>
</comment>
<comment type="catalytic activity">
    <reaction evidence="4 5">
        <text>(S)-cis-N-methylcanadine + reduced [NADPH--hemoprotein reductase] + O2 = (S)-1-hydroxy-N-methylcanadine + oxidized [NADPH--hemoprotein reductase] + H2O + H(+)</text>
        <dbReference type="Rhea" id="RHEA:57376"/>
        <dbReference type="Rhea" id="RHEA-COMP:11964"/>
        <dbReference type="Rhea" id="RHEA-COMP:11965"/>
        <dbReference type="ChEBI" id="CHEBI:15377"/>
        <dbReference type="ChEBI" id="CHEBI:15378"/>
        <dbReference type="ChEBI" id="CHEBI:15379"/>
        <dbReference type="ChEBI" id="CHEBI:50540"/>
        <dbReference type="ChEBI" id="CHEBI:57618"/>
        <dbReference type="ChEBI" id="CHEBI:58210"/>
        <dbReference type="ChEBI" id="CHEBI:141633"/>
        <dbReference type="EC" id="1.14.14.166"/>
    </reaction>
    <physiologicalReaction direction="left-to-right" evidence="9">
        <dbReference type="Rhea" id="RHEA:57377"/>
    </physiologicalReaction>
</comment>
<comment type="cofactor">
    <cofactor evidence="1">
        <name>heme</name>
        <dbReference type="ChEBI" id="CHEBI:30413"/>
    </cofactor>
</comment>
<comment type="biophysicochemical properties">
    <kinetics>
        <KM evidence="4">19.5 uM for (S)-N-methylcanadine</KM>
        <Vmax evidence="4">98.0 pmol/min/mg enzyme with (S)-N-methylcanadine as substrate</Vmax>
    </kinetics>
</comment>
<comment type="pathway">
    <text evidence="8">Alkaloid biosynthesis.</text>
</comment>
<comment type="subcellular location">
    <subcellularLocation>
        <location evidence="2">Membrane</location>
        <topology evidence="2">Single-pass membrane protein</topology>
    </subcellularLocation>
</comment>
<comment type="tissue specificity">
    <text evidence="3">Highly expressed in capsules (PubMed:22653730). Expressed is stems (PubMed:22653730).</text>
</comment>
<comment type="similarity">
    <text evidence="8">Belongs to the cytochrome P450 family.</text>
</comment>
<name>C82Y1_PAPSO</name>
<organism>
    <name type="scientific">Papaver somniferum</name>
    <name type="common">Opium poppy</name>
    <dbReference type="NCBI Taxonomy" id="3469"/>
    <lineage>
        <taxon>Eukaryota</taxon>
        <taxon>Viridiplantae</taxon>
        <taxon>Streptophyta</taxon>
        <taxon>Embryophyta</taxon>
        <taxon>Tracheophyta</taxon>
        <taxon>Spermatophyta</taxon>
        <taxon>Magnoliopsida</taxon>
        <taxon>Ranunculales</taxon>
        <taxon>Papaveraceae</taxon>
        <taxon>Papaveroideae</taxon>
        <taxon>Papaver</taxon>
    </lineage>
</organism>
<evidence type="ECO:0000250" key="1">
    <source>
        <dbReference type="UniProtKB" id="Q96242"/>
    </source>
</evidence>
<evidence type="ECO:0000255" key="2"/>
<evidence type="ECO:0000269" key="3">
    <source>
    </source>
</evidence>
<evidence type="ECO:0000269" key="4">
    <source>
    </source>
</evidence>
<evidence type="ECO:0000269" key="5">
    <source>
    </source>
</evidence>
<evidence type="ECO:0000269" key="6">
    <source>
    </source>
</evidence>
<evidence type="ECO:0000303" key="7">
    <source>
    </source>
</evidence>
<evidence type="ECO:0000305" key="8"/>
<evidence type="ECO:0000305" key="9">
    <source>
    </source>
</evidence>
<keyword id="KW-0017">Alkaloid metabolism</keyword>
<keyword id="KW-0349">Heme</keyword>
<keyword id="KW-0408">Iron</keyword>
<keyword id="KW-0472">Membrane</keyword>
<keyword id="KW-0479">Metal-binding</keyword>
<keyword id="KW-0503">Monooxygenase</keyword>
<keyword id="KW-0560">Oxidoreductase</keyword>
<keyword id="KW-0812">Transmembrane</keyword>
<keyword id="KW-1133">Transmembrane helix</keyword>
<gene>
    <name evidence="7" type="primary">CYP82Y1</name>
</gene>